<comment type="function">
    <text evidence="1">Catalyzes the phosphorylation of D-glycero-D-manno-heptose 7-phosphate at the C-1 position to selectively form D-glycero-beta-D-manno-heptose-1,7-bisphosphate.</text>
</comment>
<comment type="function">
    <text evidence="1">Catalyzes the ADP transfer from ATP to D-glycero-beta-D-manno-heptose 1-phosphate, yielding ADP-D-glycero-beta-D-manno-heptose.</text>
</comment>
<comment type="catalytic activity">
    <reaction evidence="1">
        <text>D-glycero-beta-D-manno-heptose 7-phosphate + ATP = D-glycero-beta-D-manno-heptose 1,7-bisphosphate + ADP + H(+)</text>
        <dbReference type="Rhea" id="RHEA:27473"/>
        <dbReference type="ChEBI" id="CHEBI:15378"/>
        <dbReference type="ChEBI" id="CHEBI:30616"/>
        <dbReference type="ChEBI" id="CHEBI:60204"/>
        <dbReference type="ChEBI" id="CHEBI:60208"/>
        <dbReference type="ChEBI" id="CHEBI:456216"/>
        <dbReference type="EC" id="2.7.1.167"/>
    </reaction>
</comment>
<comment type="catalytic activity">
    <reaction evidence="1">
        <text>D-glycero-beta-D-manno-heptose 1-phosphate + ATP + H(+) = ADP-D-glycero-beta-D-manno-heptose + diphosphate</text>
        <dbReference type="Rhea" id="RHEA:27465"/>
        <dbReference type="ChEBI" id="CHEBI:15378"/>
        <dbReference type="ChEBI" id="CHEBI:30616"/>
        <dbReference type="ChEBI" id="CHEBI:33019"/>
        <dbReference type="ChEBI" id="CHEBI:59967"/>
        <dbReference type="ChEBI" id="CHEBI:61593"/>
        <dbReference type="EC" id="2.7.7.70"/>
    </reaction>
</comment>
<comment type="pathway">
    <text evidence="1">Nucleotide-sugar biosynthesis; ADP-L-glycero-beta-D-manno-heptose biosynthesis; ADP-L-glycero-beta-D-manno-heptose from D-glycero-beta-D-manno-heptose 7-phosphate: step 1/4.</text>
</comment>
<comment type="pathway">
    <text evidence="1">Nucleotide-sugar biosynthesis; ADP-L-glycero-beta-D-manno-heptose biosynthesis; ADP-L-glycero-beta-D-manno-heptose from D-glycero-beta-D-manno-heptose 7-phosphate: step 3/4.</text>
</comment>
<comment type="subunit">
    <text evidence="1">Homodimer.</text>
</comment>
<comment type="similarity">
    <text evidence="1">In the N-terminal section; belongs to the carbohydrate kinase PfkB family.</text>
</comment>
<comment type="similarity">
    <text evidence="1">In the C-terminal section; belongs to the cytidylyltransferase family.</text>
</comment>
<proteinExistence type="inferred from homology"/>
<reference key="1">
    <citation type="submission" date="2007-11" db="EMBL/GenBank/DDBJ databases">
        <title>Genome sequencing of phylogenetically and phenotypically diverse Coxiella burnetii isolates.</title>
        <authorList>
            <person name="Seshadri R."/>
            <person name="Samuel J.E."/>
        </authorList>
    </citation>
    <scope>NUCLEOTIDE SEQUENCE [LARGE SCALE GENOMIC DNA]</scope>
    <source>
        <strain>RSA 331 / Henzerling II</strain>
    </source>
</reference>
<organism>
    <name type="scientific">Coxiella burnetii (strain RSA 331 / Henzerling II)</name>
    <dbReference type="NCBI Taxonomy" id="360115"/>
    <lineage>
        <taxon>Bacteria</taxon>
        <taxon>Pseudomonadati</taxon>
        <taxon>Pseudomonadota</taxon>
        <taxon>Gammaproteobacteria</taxon>
        <taxon>Legionellales</taxon>
        <taxon>Coxiellaceae</taxon>
        <taxon>Coxiella</taxon>
    </lineage>
</organism>
<sequence length="475" mass="51922">MADKIDISLYEKARIVVYGDIMLDRYWYGQASRISPEAPIPVVNVDQIEARPGGAANVALNVAALGASVELMGVVGDDQESRELETLLNKKSINCHFHRLNDHPTVTKLRVLGQNQQLLRLDFEKTLKHYEDKGLLQRYQHSLSHAQAVILSDYAKGALFNVTAPIQRAREKGLPVLVDPKSVDFSRYAGATLLTPNLKEFEAVVGHCRTDQELEFKARALIHQYRFEAILITRGKQGMMLIQKEGAAINLVAHAREVYDVTGAGDTVIAVMAASLAAGGDFYEAAQLANLAAGLVVRKLGAATVTVPELRRALHQITASHHGILSEKALLLAVADARAHGETIVMTNGCFDILHAGHVHYLEAAKAMGHRLIVAVNDDNSVRRLKGKDRPINSLQARMEVLTALRAIDWVVPFSEDTPARLITEVLPNILVKGGDYQPSQIAGGDEVVKNGGKVLTIPIKEGFSTSRLVEKMLN</sequence>
<gene>
    <name evidence="1" type="primary">hldE</name>
    <name type="ordered locus">COXBURSA331_A1838</name>
</gene>
<evidence type="ECO:0000255" key="1">
    <source>
        <dbReference type="HAMAP-Rule" id="MF_01603"/>
    </source>
</evidence>
<protein>
    <recommendedName>
        <fullName evidence="1">Bifunctional protein HldE</fullName>
    </recommendedName>
    <domain>
        <recommendedName>
            <fullName evidence="1">D-beta-D-heptose 7-phosphate kinase</fullName>
            <ecNumber evidence="1">2.7.1.167</ecNumber>
        </recommendedName>
        <alternativeName>
            <fullName evidence="1">D-beta-D-heptose 7-phosphotransferase</fullName>
        </alternativeName>
        <alternativeName>
            <fullName evidence="1">D-glycero-beta-D-manno-heptose-7-phosphate kinase</fullName>
        </alternativeName>
    </domain>
    <domain>
        <recommendedName>
            <fullName evidence="1">D-beta-D-heptose 1-phosphate adenylyltransferase</fullName>
            <ecNumber evidence="1">2.7.7.70</ecNumber>
        </recommendedName>
        <alternativeName>
            <fullName evidence="1">D-glycero-beta-D-manno-heptose 1-phosphate adenylyltransferase</fullName>
        </alternativeName>
    </domain>
</protein>
<dbReference type="EC" id="2.7.1.167" evidence="1"/>
<dbReference type="EC" id="2.7.7.70" evidence="1"/>
<dbReference type="EMBL" id="CP000890">
    <property type="protein sequence ID" value="ABX77960.1"/>
    <property type="molecule type" value="Genomic_DNA"/>
</dbReference>
<dbReference type="SMR" id="A9N9S2"/>
<dbReference type="KEGG" id="cbs:COXBURSA331_A1838"/>
<dbReference type="HOGENOM" id="CLU_021150_2_1_6"/>
<dbReference type="UniPathway" id="UPA00356">
    <property type="reaction ID" value="UER00437"/>
</dbReference>
<dbReference type="UniPathway" id="UPA00356">
    <property type="reaction ID" value="UER00439"/>
</dbReference>
<dbReference type="GO" id="GO:0005829">
    <property type="term" value="C:cytosol"/>
    <property type="evidence" value="ECO:0007669"/>
    <property type="project" value="TreeGrafter"/>
</dbReference>
<dbReference type="GO" id="GO:0005524">
    <property type="term" value="F:ATP binding"/>
    <property type="evidence" value="ECO:0007669"/>
    <property type="project" value="UniProtKB-UniRule"/>
</dbReference>
<dbReference type="GO" id="GO:0033785">
    <property type="term" value="F:heptose 7-phosphate kinase activity"/>
    <property type="evidence" value="ECO:0007669"/>
    <property type="project" value="UniProtKB-UniRule"/>
</dbReference>
<dbReference type="GO" id="GO:0033786">
    <property type="term" value="F:heptose-1-phosphate adenylyltransferase activity"/>
    <property type="evidence" value="ECO:0007669"/>
    <property type="project" value="UniProtKB-UniRule"/>
</dbReference>
<dbReference type="GO" id="GO:0016773">
    <property type="term" value="F:phosphotransferase activity, alcohol group as acceptor"/>
    <property type="evidence" value="ECO:0007669"/>
    <property type="project" value="InterPro"/>
</dbReference>
<dbReference type="GO" id="GO:0097171">
    <property type="term" value="P:ADP-L-glycero-beta-D-manno-heptose biosynthetic process"/>
    <property type="evidence" value="ECO:0007669"/>
    <property type="project" value="UniProtKB-UniPathway"/>
</dbReference>
<dbReference type="CDD" id="cd01172">
    <property type="entry name" value="RfaE_like"/>
    <property type="match status" value="1"/>
</dbReference>
<dbReference type="FunFam" id="3.40.1190.20:FF:000002">
    <property type="entry name" value="Bifunctional protein HldE"/>
    <property type="match status" value="1"/>
</dbReference>
<dbReference type="FunFam" id="3.40.50.620:FF:000028">
    <property type="entry name" value="Bifunctional protein HldE"/>
    <property type="match status" value="1"/>
</dbReference>
<dbReference type="Gene3D" id="3.40.1190.20">
    <property type="match status" value="1"/>
</dbReference>
<dbReference type="Gene3D" id="3.40.50.620">
    <property type="entry name" value="HUPs"/>
    <property type="match status" value="1"/>
</dbReference>
<dbReference type="HAMAP" id="MF_01603">
    <property type="entry name" value="HldE"/>
    <property type="match status" value="1"/>
</dbReference>
<dbReference type="InterPro" id="IPR023030">
    <property type="entry name" value="Bifunc_HldE"/>
</dbReference>
<dbReference type="InterPro" id="IPR002173">
    <property type="entry name" value="Carboh/pur_kinase_PfkB_CS"/>
</dbReference>
<dbReference type="InterPro" id="IPR004821">
    <property type="entry name" value="Cyt_trans-like"/>
</dbReference>
<dbReference type="InterPro" id="IPR011611">
    <property type="entry name" value="PfkB_dom"/>
</dbReference>
<dbReference type="InterPro" id="IPR011913">
    <property type="entry name" value="RfaE_dom_I"/>
</dbReference>
<dbReference type="InterPro" id="IPR011914">
    <property type="entry name" value="RfaE_dom_II"/>
</dbReference>
<dbReference type="InterPro" id="IPR029056">
    <property type="entry name" value="Ribokinase-like"/>
</dbReference>
<dbReference type="InterPro" id="IPR014729">
    <property type="entry name" value="Rossmann-like_a/b/a_fold"/>
</dbReference>
<dbReference type="NCBIfam" id="TIGR00125">
    <property type="entry name" value="cyt_tran_rel"/>
    <property type="match status" value="1"/>
</dbReference>
<dbReference type="NCBIfam" id="NF008454">
    <property type="entry name" value="PRK11316.1"/>
    <property type="match status" value="1"/>
</dbReference>
<dbReference type="NCBIfam" id="TIGR02198">
    <property type="entry name" value="rfaE_dom_I"/>
    <property type="match status" value="1"/>
</dbReference>
<dbReference type="NCBIfam" id="TIGR02199">
    <property type="entry name" value="rfaE_dom_II"/>
    <property type="match status" value="1"/>
</dbReference>
<dbReference type="PANTHER" id="PTHR46969">
    <property type="entry name" value="BIFUNCTIONAL PROTEIN HLDE"/>
    <property type="match status" value="1"/>
</dbReference>
<dbReference type="PANTHER" id="PTHR46969:SF1">
    <property type="entry name" value="BIFUNCTIONAL PROTEIN HLDE"/>
    <property type="match status" value="1"/>
</dbReference>
<dbReference type="Pfam" id="PF01467">
    <property type="entry name" value="CTP_transf_like"/>
    <property type="match status" value="1"/>
</dbReference>
<dbReference type="Pfam" id="PF00294">
    <property type="entry name" value="PfkB"/>
    <property type="match status" value="1"/>
</dbReference>
<dbReference type="SUPFAM" id="SSF52374">
    <property type="entry name" value="Nucleotidylyl transferase"/>
    <property type="match status" value="1"/>
</dbReference>
<dbReference type="SUPFAM" id="SSF53613">
    <property type="entry name" value="Ribokinase-like"/>
    <property type="match status" value="1"/>
</dbReference>
<dbReference type="PROSITE" id="PS00583">
    <property type="entry name" value="PFKB_KINASES_1"/>
    <property type="match status" value="1"/>
</dbReference>
<keyword id="KW-0067">ATP-binding</keyword>
<keyword id="KW-0119">Carbohydrate metabolism</keyword>
<keyword id="KW-0418">Kinase</keyword>
<keyword id="KW-0511">Multifunctional enzyme</keyword>
<keyword id="KW-0547">Nucleotide-binding</keyword>
<keyword id="KW-0548">Nucleotidyltransferase</keyword>
<keyword id="KW-0808">Transferase</keyword>
<accession>A9N9S2</accession>
<name>HLDE_COXBR</name>
<feature type="chain" id="PRO_1000088020" description="Bifunctional protein HldE">
    <location>
        <begin position="1"/>
        <end position="475"/>
    </location>
</feature>
<feature type="region of interest" description="Ribokinase">
    <location>
        <begin position="1"/>
        <end position="321"/>
    </location>
</feature>
<feature type="region of interest" description="Cytidylyltransferase">
    <location>
        <begin position="346"/>
        <end position="475"/>
    </location>
</feature>
<feature type="active site" evidence="1">
    <location>
        <position position="266"/>
    </location>
</feature>
<feature type="binding site" evidence="1">
    <location>
        <begin position="197"/>
        <end position="200"/>
    </location>
    <ligand>
        <name>ATP</name>
        <dbReference type="ChEBI" id="CHEBI:30616"/>
    </ligand>
</feature>